<comment type="function">
    <text evidence="4 5 7">Placenta-specific zinc-finger RNA-binding protein that destabilizes cytoplasmic AU-rich element (ARE)-containing mRNA transcripts by promoting their poly(A) tail removal or deadenylation, and hence provide a mechanism for attenuating protein synthesis (PubMed:15814898, PubMed:26952984). Binds to the 3'-UTR ARE of placental target mRNAs, such as TNF, HBEGF and LIPG (PubMed:15814898, PubMed:18367448, PubMed:26952984). Involved in placental expression of many genes important for normal placental physiology (PubMed:26952984).</text>
</comment>
<comment type="subcellular location">
    <subcellularLocation>
        <location evidence="4 5 6">Cytoplasm</location>
    </subcellularLocation>
    <subcellularLocation>
        <location evidence="9">Membrane</location>
        <topology evidence="9">Multi-pass membrane protein</topology>
    </subcellularLocation>
    <text evidence="4 5 6">Localizes exlusively in the cytoplasm (PubMed:15814898, PubMed:18367448). Not detected in the nucleus despite the presence of a nuclear localization signal (NLS) in the zinc finger regions; a C-terminal alanine-rich repeat domain is able to override the activity of the nuclear localization signal and prevent import into the nucleus (PubMed:18367448, PubMed:26493225).</text>
</comment>
<comment type="tissue specificity">
    <text evidence="4 7">Expressed in placenta and extraembryonic tissues (at protein level). Not detected in embryos and fetus (PubMed:15814898, PubMed:26952984).</text>
</comment>
<comment type="developmental stage">
    <text evidence="4 7">Expressed in placenta at 14.5 dpc. Expressed in the single layer of endodermal epithelial cells of the visceral yolk sac at 15.5 dpc (PubMed:26952984). Expressed in syncytiotrophoblast and trophoblast giant cells of the labyrinth region of the placenta at 17.5 dpc (PubMed:15814898, PubMed:26952984) (at protein level). Expressed specifically in extraembryonic structures, in placenta from 9.5 to 18.5 and yolk sac/amnion from 12.5 to 18.5 (PubMed:15814898, PubMed:26952984). Expressed in the labyrinthine layer of the trophoblastic placenta at 10.5, 12.5 and 14.5 dpc (PubMed:15814898). Expressed in syncytiotrophoblast and trophoblast giant cells, less in spongiotrophoblast cells, and not detected in maternal decidua or in allantois at 17.5 dpc (PubMed:26952984).</text>
</comment>
<comment type="domain">
    <text evidence="5">Contains long series of C-terminal alanine-rich repeats that serve to maintain the protein in the cytoplasm.</text>
</comment>
<comment type="disruption phenotype">
    <text evidence="7">Mice are viable and fertile, without apparent morphological or histological abnormalities in the placenta, but display a decrease in the numbers of surviving offspring. Display an abnormal accumulation of placental 3'UTR ARE-containing mRNAs. Exhibit also a decrease in ARE-containing mRNA decay in differentiated trophoblast stem cells.</text>
</comment>
<comment type="miscellaneous">
    <text evidence="4 6">Rodent-specific retrogene derived apparently from its related family member ZFP36L2 mRNA (PubMed:15814898, PubMed:26493225).</text>
</comment>
<gene>
    <name evidence="8 10" type="primary">Zfp36l3</name>
</gene>
<protein>
    <recommendedName>
        <fullName evidence="9">mRNA decay activator protein ZFP36L3</fullName>
    </recommendedName>
    <alternativeName>
        <fullName evidence="10">Zinc finger protein 36, C3H1 type-like 3</fullName>
    </alternativeName>
    <alternativeName>
        <fullName evidence="8">zinc finger protein 36-like 3</fullName>
    </alternativeName>
</protein>
<keyword id="KW-0963">Cytoplasm</keyword>
<keyword id="KW-0238">DNA-binding</keyword>
<keyword id="KW-0472">Membrane</keyword>
<keyword id="KW-0479">Metal-binding</keyword>
<keyword id="KW-1185">Reference proteome</keyword>
<keyword id="KW-0677">Repeat</keyword>
<keyword id="KW-0694">RNA-binding</keyword>
<keyword id="KW-0812">Transmembrane</keyword>
<keyword id="KW-1133">Transmembrane helix</keyword>
<keyword id="KW-0862">Zinc</keyword>
<keyword id="KW-0863">Zinc-finger</keyword>
<dbReference type="EMBL" id="AY661338">
    <property type="protein sequence ID" value="AAV74249.1"/>
    <property type="molecule type" value="mRNA"/>
</dbReference>
<dbReference type="EMBL" id="AL691513">
    <property type="status" value="NOT_ANNOTATED_CDS"/>
    <property type="molecule type" value="Genomic_DNA"/>
</dbReference>
<dbReference type="CCDS" id="CCDS30138.1"/>
<dbReference type="RefSeq" id="NP_001009549.1">
    <property type="nucleotide sequence ID" value="NM_001009549.2"/>
</dbReference>
<dbReference type="SMR" id="Q5ISE2"/>
<dbReference type="CORUM" id="Q5ISE2"/>
<dbReference type="FunCoup" id="Q5ISE2">
    <property type="interactions" value="14"/>
</dbReference>
<dbReference type="STRING" id="10090.ENSMUSP00000071630"/>
<dbReference type="GlyGen" id="Q5ISE2">
    <property type="glycosylation" value="2 sites"/>
</dbReference>
<dbReference type="iPTMnet" id="Q5ISE2"/>
<dbReference type="PhosphoSitePlus" id="Q5ISE2"/>
<dbReference type="jPOST" id="Q5ISE2"/>
<dbReference type="PaxDb" id="10090-ENSMUSP00000071630"/>
<dbReference type="PeptideAtlas" id="Q5ISE2"/>
<dbReference type="ProteomicsDB" id="275260"/>
<dbReference type="DNASU" id="333473"/>
<dbReference type="Ensembl" id="ENSMUST00000071711.4">
    <property type="protein sequence ID" value="ENSMUSP00000071630.4"/>
    <property type="gene ID" value="ENSMUSG00000059334.7"/>
</dbReference>
<dbReference type="GeneID" id="333473"/>
<dbReference type="KEGG" id="mmu:333473"/>
<dbReference type="UCSC" id="uc009tfk.1">
    <property type="organism name" value="mouse"/>
</dbReference>
<dbReference type="AGR" id="MGI:3525151"/>
<dbReference type="CTD" id="333473"/>
<dbReference type="MGI" id="MGI:3525151">
    <property type="gene designation" value="Zfp36l3"/>
</dbReference>
<dbReference type="VEuPathDB" id="HostDB:ENSMUSG00000059334"/>
<dbReference type="eggNOG" id="KOG1677">
    <property type="taxonomic scope" value="Eukaryota"/>
</dbReference>
<dbReference type="GeneTree" id="ENSGT00940000155076"/>
<dbReference type="HOGENOM" id="CLU_383066_0_0_1"/>
<dbReference type="InParanoid" id="Q5ISE2"/>
<dbReference type="OMA" id="ASAQFQM"/>
<dbReference type="OrthoDB" id="410307at2759"/>
<dbReference type="TreeFam" id="TF315463"/>
<dbReference type="BioGRID-ORCS" id="333473">
    <property type="hits" value="1 hit in 78 CRISPR screens"/>
</dbReference>
<dbReference type="PRO" id="PR:Q5ISE2"/>
<dbReference type="Proteomes" id="UP000000589">
    <property type="component" value="Chromosome X"/>
</dbReference>
<dbReference type="RNAct" id="Q5ISE2">
    <property type="molecule type" value="protein"/>
</dbReference>
<dbReference type="Bgee" id="ENSMUSG00000059334">
    <property type="expression patterns" value="Expressed in placenta and 14 other cell types or tissues"/>
</dbReference>
<dbReference type="GO" id="GO:0005737">
    <property type="term" value="C:cytoplasm"/>
    <property type="evidence" value="ECO:0000314"/>
    <property type="project" value="MGI"/>
</dbReference>
<dbReference type="GO" id="GO:0016020">
    <property type="term" value="C:membrane"/>
    <property type="evidence" value="ECO:0007669"/>
    <property type="project" value="UniProtKB-SubCell"/>
</dbReference>
<dbReference type="GO" id="GO:0003677">
    <property type="term" value="F:DNA binding"/>
    <property type="evidence" value="ECO:0007669"/>
    <property type="project" value="UniProtKB-KW"/>
</dbReference>
<dbReference type="GO" id="GO:0035925">
    <property type="term" value="F:mRNA 3'-UTR AU-rich region binding"/>
    <property type="evidence" value="ECO:0000314"/>
    <property type="project" value="MGI"/>
</dbReference>
<dbReference type="GO" id="GO:0003723">
    <property type="term" value="F:RNA binding"/>
    <property type="evidence" value="ECO:0000314"/>
    <property type="project" value="MGI"/>
</dbReference>
<dbReference type="GO" id="GO:0008270">
    <property type="term" value="F:zinc ion binding"/>
    <property type="evidence" value="ECO:0007669"/>
    <property type="project" value="UniProtKB-KW"/>
</dbReference>
<dbReference type="GO" id="GO:0000288">
    <property type="term" value="P:nuclear-transcribed mRNA catabolic process, deadenylation-dependent decay"/>
    <property type="evidence" value="ECO:0000314"/>
    <property type="project" value="MGI"/>
</dbReference>
<dbReference type="GO" id="GO:0000289">
    <property type="term" value="P:nuclear-transcribed mRNA poly(A) tail shortening"/>
    <property type="evidence" value="ECO:0000314"/>
    <property type="project" value="MGI"/>
</dbReference>
<dbReference type="FunFam" id="4.10.1000.10:FF:000001">
    <property type="entry name" value="zinc finger CCCH domain-containing protein 15-like"/>
    <property type="match status" value="1"/>
</dbReference>
<dbReference type="FunFam" id="4.10.1000.10:FF:000002">
    <property type="entry name" value="Zinc finger protein 36, C3H1 type-like 1"/>
    <property type="match status" value="1"/>
</dbReference>
<dbReference type="Gene3D" id="4.10.1000.10">
    <property type="entry name" value="Zinc finger, CCCH-type"/>
    <property type="match status" value="2"/>
</dbReference>
<dbReference type="InterPro" id="IPR011004">
    <property type="entry name" value="Trimer_LpxA-like_sf"/>
</dbReference>
<dbReference type="InterPro" id="IPR045877">
    <property type="entry name" value="ZFP36-like"/>
</dbReference>
<dbReference type="InterPro" id="IPR000571">
    <property type="entry name" value="Znf_CCCH"/>
</dbReference>
<dbReference type="InterPro" id="IPR036855">
    <property type="entry name" value="Znf_CCCH_sf"/>
</dbReference>
<dbReference type="PANTHER" id="PTHR12547">
    <property type="entry name" value="CCCH ZINC FINGER/TIS11-RELATED"/>
    <property type="match status" value="1"/>
</dbReference>
<dbReference type="PANTHER" id="PTHR12547:SF53">
    <property type="entry name" value="MRNA DECAY ACTIVATOR PROTEIN ZFP36L1"/>
    <property type="match status" value="1"/>
</dbReference>
<dbReference type="Pfam" id="PF00642">
    <property type="entry name" value="zf-CCCH"/>
    <property type="match status" value="2"/>
</dbReference>
<dbReference type="SMART" id="SM00356">
    <property type="entry name" value="ZnF_C3H1"/>
    <property type="match status" value="2"/>
</dbReference>
<dbReference type="SUPFAM" id="SSF90229">
    <property type="entry name" value="CCCH zinc finger"/>
    <property type="match status" value="2"/>
</dbReference>
<dbReference type="SUPFAM" id="SSF51161">
    <property type="entry name" value="Trimeric LpxA-like enzymes"/>
    <property type="match status" value="1"/>
</dbReference>
<dbReference type="PROSITE" id="PS50103">
    <property type="entry name" value="ZF_C3H1"/>
    <property type="match status" value="2"/>
</dbReference>
<feature type="chain" id="PRO_0000423554" description="mRNA decay activator protein ZFP36L3">
    <location>
        <begin position="1"/>
        <end position="725"/>
    </location>
</feature>
<feature type="transmembrane region" description="Helical" evidence="1">
    <location>
        <begin position="380"/>
        <end position="400"/>
    </location>
</feature>
<feature type="transmembrane region" description="Helical" evidence="1">
    <location>
        <begin position="420"/>
        <end position="440"/>
    </location>
</feature>
<feature type="transmembrane region" description="Helical" evidence="1">
    <location>
        <begin position="441"/>
        <end position="461"/>
    </location>
</feature>
<feature type="transmembrane region" description="Helical" evidence="1">
    <location>
        <begin position="468"/>
        <end position="488"/>
    </location>
</feature>
<feature type="zinc finger region" description="C3H1-type 1" evidence="2">
    <location>
        <begin position="122"/>
        <end position="150"/>
    </location>
</feature>
<feature type="zinc finger region" description="C3H1-type 2" evidence="2">
    <location>
        <begin position="160"/>
        <end position="188"/>
    </location>
</feature>
<feature type="region of interest" description="Disordered" evidence="3">
    <location>
        <begin position="1"/>
        <end position="119"/>
    </location>
</feature>
<feature type="region of interest" description="Necessary for cytoplasmic localization" evidence="5">
    <location>
        <begin position="193"/>
        <end position="711"/>
    </location>
</feature>
<feature type="region of interest" description="Disordered" evidence="3">
    <location>
        <begin position="276"/>
        <end position="310"/>
    </location>
</feature>
<feature type="region of interest" description="Disordered" evidence="3">
    <location>
        <begin position="686"/>
        <end position="709"/>
    </location>
</feature>
<feature type="compositionally biased region" description="Low complexity" evidence="3">
    <location>
        <begin position="1"/>
        <end position="25"/>
    </location>
</feature>
<feature type="compositionally biased region" description="Polar residues" evidence="3">
    <location>
        <begin position="42"/>
        <end position="72"/>
    </location>
</feature>
<feature type="compositionally biased region" description="Polar residues" evidence="3">
    <location>
        <begin position="100"/>
        <end position="119"/>
    </location>
</feature>
<feature type="compositionally biased region" description="Basic and acidic residues" evidence="3">
    <location>
        <begin position="280"/>
        <end position="294"/>
    </location>
</feature>
<feature type="compositionally biased region" description="Low complexity" evidence="3">
    <location>
        <begin position="693"/>
        <end position="702"/>
    </location>
</feature>
<feature type="mutagenesis site" description="Reduces ARE-containing RNA-binding. Loss of ARE-containing RNA-binding; when associated with A-157." evidence="5">
    <original>R</original>
    <variation>A</variation>
    <location>
        <position position="153"/>
    </location>
</feature>
<feature type="mutagenesis site" description="Reduces ARE-containing RNA-binding. Loss of ARE-containing RNA-binding; when associated with A-153." evidence="5">
    <original>R</original>
    <variation>A</variation>
    <location>
        <position position="157"/>
    </location>
</feature>
<name>Z36L3_MOUSE</name>
<reference key="1">
    <citation type="journal article" date="2005" name="Biol. Reprod.">
        <title>Zfp36l3, a rodent X chromosome gene encoding a placenta-specific member of the Tristetraprolin family of CCCH tandem zinc finger proteins.</title>
        <authorList>
            <person name="Blackshear P.J."/>
            <person name="Phillips R.S."/>
            <person name="Ghosh S."/>
            <person name="Ramos S.B."/>
            <person name="Ramos S.V."/>
            <person name="Richfield E.K."/>
            <person name="Lai W.S."/>
        </authorList>
    </citation>
    <scope>NUCLEOTIDE SEQUENCE [MRNA]</scope>
    <scope>FUNCTION</scope>
    <scope>RNA-BINDING</scope>
    <scope>SUBCELLULAR LOCATION</scope>
    <scope>TISSUE SPECIFICITY</scope>
    <scope>DEVELOPMENTAL STAGE</scope>
</reference>
<reference key="2">
    <citation type="journal article" date="2009" name="PLoS Biol.">
        <title>Lineage-specific biology revealed by a finished genome assembly of the mouse.</title>
        <authorList>
            <person name="Church D.M."/>
            <person name="Goodstadt L."/>
            <person name="Hillier L.W."/>
            <person name="Zody M.C."/>
            <person name="Goldstein S."/>
            <person name="She X."/>
            <person name="Bult C.J."/>
            <person name="Agarwala R."/>
            <person name="Cherry J.L."/>
            <person name="DiCuccio M."/>
            <person name="Hlavina W."/>
            <person name="Kapustin Y."/>
            <person name="Meric P."/>
            <person name="Maglott D."/>
            <person name="Birtle Z."/>
            <person name="Marques A.C."/>
            <person name="Graves T."/>
            <person name="Zhou S."/>
            <person name="Teague B."/>
            <person name="Potamousis K."/>
            <person name="Churas C."/>
            <person name="Place M."/>
            <person name="Herschleb J."/>
            <person name="Runnheim R."/>
            <person name="Forrest D."/>
            <person name="Amos-Landgraf J."/>
            <person name="Schwartz D.C."/>
            <person name="Cheng Z."/>
            <person name="Lindblad-Toh K."/>
            <person name="Eichler E.E."/>
            <person name="Ponting C.P."/>
        </authorList>
    </citation>
    <scope>NUCLEOTIDE SEQUENCE [LARGE SCALE GENOMIC DNA]</scope>
    <source>
        <strain>C57BL/6J</strain>
    </source>
</reference>
<reference key="3">
    <citation type="journal article" date="2008" name="J. Biol. Chem.">
        <title>A unique C-terminal repeat domain maintains the cytosolic localization of the placenta-specific tristetraprolin family member ZFP36L3.</title>
        <authorList>
            <person name="Frederick E.D."/>
            <person name="Ramos S.B."/>
            <person name="Blackshear P.J."/>
        </authorList>
    </citation>
    <scope>RNA-BINDING</scope>
    <scope>SUBCELLULAR LOCATION</scope>
    <scope>DOMAIN</scope>
    <scope>MUTAGENESIS OF ARG-153 AND ARG-157</scope>
</reference>
<reference key="4">
    <citation type="journal article" date="2016" name="Development">
        <title>Deficiency of the placenta- and yolk sac-specific tristetraprolin family member ZFP36L3 identifies likely mRNA targets and an unexpected link to placental iron metabolism.</title>
        <authorList>
            <person name="Stumpo D.J."/>
            <person name="Trempus C.S."/>
            <person name="Tucker C.J."/>
            <person name="Huang W."/>
            <person name="Li L."/>
            <person name="Kluckman K."/>
            <person name="Bortner D.M."/>
            <person name="Blackshear P.J."/>
        </authorList>
    </citation>
    <scope>FUNCTION</scope>
    <scope>DISRUPTION PHENOTYPE</scope>
    <scope>DEVELOPMENTAL STAGE</scope>
</reference>
<reference key="5">
    <citation type="journal article" date="2016" name="Mol. Phylogenet. Evol.">
        <title>Emergence and evolution of Zfp36l3.</title>
        <authorList>
            <person name="Gingerich T.J."/>
            <person name="Stumpo D.J."/>
            <person name="Lai W.S."/>
            <person name="Randall T.A."/>
            <person name="Steppan S.J."/>
            <person name="Blackshear P.J."/>
        </authorList>
    </citation>
    <scope>SUBCELLULAR LOCATION</scope>
    <scope>GENE EVOLUTION</scope>
    <scope>RETROGENE</scope>
</reference>
<organism>
    <name type="scientific">Mus musculus</name>
    <name type="common">Mouse</name>
    <dbReference type="NCBI Taxonomy" id="10090"/>
    <lineage>
        <taxon>Eukaryota</taxon>
        <taxon>Metazoa</taxon>
        <taxon>Chordata</taxon>
        <taxon>Craniata</taxon>
        <taxon>Vertebrata</taxon>
        <taxon>Euteleostomi</taxon>
        <taxon>Mammalia</taxon>
        <taxon>Eutheria</taxon>
        <taxon>Euarchontoglires</taxon>
        <taxon>Glires</taxon>
        <taxon>Rodentia</taxon>
        <taxon>Myomorpha</taxon>
        <taxon>Muroidea</taxon>
        <taxon>Muridae</taxon>
        <taxon>Murinae</taxon>
        <taxon>Mus</taxon>
        <taxon>Mus</taxon>
    </lineage>
</organism>
<sequence>MANNNLNRPLNTNVADSSNSSSTPGTAPPPSSSDPQVLGHQAPSSSASSLTEDCSSSFARDLNSYNNGQSGATGAVSWEAPHEPSEANAVSQIHPRNGEHSLQQKPKPQKVSGSSSLATSERYKTELCRPFEESGICKYGHKCQFAHGYRELRTLSRHPKYKTEPCRTFHSVGFCPYGTRCHFIHNQPEQQPVLSESTLEEPSSFNGSNVLHLGVNGEQQPGLQSDSPSGFLSVNSQALQAPLQLNQQALSSGGVMPSSHPAAANLRMMCCRTSSSTTAHDADKDPDKDADKDPSNNSANDALAFPQEPGDFSPVAFQNPNTATTTPTAFYNNQQQMGLAASAQFQMPLARPLPSATIFGQASVGPALTPGAAMAPGAALAPAAALTPAAALAPGAAMALGAAMATGAAMATGAALTPGAALALGAAMAAGAALAPGAAMAPGAAMATGAALAFGAAMATGTTLTPGAAMALGAAMATGAALAPGAAVAPRAALAPRAAFAPGAAALAPRAALPPGAALTPGAALAPGAALAPRAALPPGATLRPGAALIPRAALAPGAALAPGAALTPGAALAPGATLAPRAALAPGAALAPRITITSRAAITPGVAIAPGVATASTGILAPGAATATVGNTSSTTITAATAAEGAAPHFTFQLPDVESESESESLEFDVVTSTLDSLLVSDDEDEDDFLRRSSSSSSLNESEFDNTNSSRRLPIFSRFSDSEK</sequence>
<accession>Q5ISE2</accession>
<evidence type="ECO:0000255" key="1"/>
<evidence type="ECO:0000255" key="2">
    <source>
        <dbReference type="PROSITE-ProRule" id="PRU00723"/>
    </source>
</evidence>
<evidence type="ECO:0000256" key="3">
    <source>
        <dbReference type="SAM" id="MobiDB-lite"/>
    </source>
</evidence>
<evidence type="ECO:0000269" key="4">
    <source>
    </source>
</evidence>
<evidence type="ECO:0000269" key="5">
    <source>
    </source>
</evidence>
<evidence type="ECO:0000269" key="6">
    <source>
    </source>
</evidence>
<evidence type="ECO:0000269" key="7">
    <source>
    </source>
</evidence>
<evidence type="ECO:0000303" key="8">
    <source>
    </source>
</evidence>
<evidence type="ECO:0000305" key="9"/>
<evidence type="ECO:0000312" key="10">
    <source>
        <dbReference type="MGI" id="MGI:3525151"/>
    </source>
</evidence>
<proteinExistence type="evidence at protein level"/>